<accession>Q9W7L4</accession>
<evidence type="ECO:0000250" key="1"/>
<evidence type="ECO:0000250" key="2">
    <source>
        <dbReference type="UniProtKB" id="P07195"/>
    </source>
</evidence>
<evidence type="ECO:0000305" key="3"/>
<dbReference type="EC" id="1.1.1.27" evidence="2"/>
<dbReference type="EMBL" id="AF072584">
    <property type="protein sequence ID" value="AAD41641.1"/>
    <property type="molecule type" value="mRNA"/>
</dbReference>
<dbReference type="SMR" id="Q9W7L4"/>
<dbReference type="UniPathway" id="UPA00554">
    <property type="reaction ID" value="UER00611"/>
</dbReference>
<dbReference type="GO" id="GO:0005737">
    <property type="term" value="C:cytoplasm"/>
    <property type="evidence" value="ECO:0007669"/>
    <property type="project" value="UniProtKB-SubCell"/>
</dbReference>
<dbReference type="GO" id="GO:0004459">
    <property type="term" value="F:L-lactate dehydrogenase activity"/>
    <property type="evidence" value="ECO:0007669"/>
    <property type="project" value="UniProtKB-EC"/>
</dbReference>
<dbReference type="GO" id="GO:0006089">
    <property type="term" value="P:lactate metabolic process"/>
    <property type="evidence" value="ECO:0007669"/>
    <property type="project" value="TreeGrafter"/>
</dbReference>
<dbReference type="CDD" id="cd05293">
    <property type="entry name" value="LDH_1"/>
    <property type="match status" value="1"/>
</dbReference>
<dbReference type="FunFam" id="3.40.50.720:FF:000029">
    <property type="entry name" value="L-lactate dehydrogenase A chain"/>
    <property type="match status" value="1"/>
</dbReference>
<dbReference type="FunFam" id="3.90.110.10:FF:000003">
    <property type="entry name" value="L-lactate dehydrogenase A chain"/>
    <property type="match status" value="1"/>
</dbReference>
<dbReference type="Gene3D" id="3.90.110.10">
    <property type="entry name" value="Lactate dehydrogenase/glycoside hydrolase, family 4, C-terminal"/>
    <property type="match status" value="1"/>
</dbReference>
<dbReference type="Gene3D" id="3.40.50.720">
    <property type="entry name" value="NAD(P)-binding Rossmann-like Domain"/>
    <property type="match status" value="1"/>
</dbReference>
<dbReference type="HAMAP" id="MF_00488">
    <property type="entry name" value="Lactate_dehydrog"/>
    <property type="match status" value="1"/>
</dbReference>
<dbReference type="InterPro" id="IPR001557">
    <property type="entry name" value="L-lactate/malate_DH"/>
</dbReference>
<dbReference type="InterPro" id="IPR011304">
    <property type="entry name" value="L-lactate_DH"/>
</dbReference>
<dbReference type="InterPro" id="IPR018177">
    <property type="entry name" value="L-lactate_DH_AS"/>
</dbReference>
<dbReference type="InterPro" id="IPR022383">
    <property type="entry name" value="Lactate/malate_DH_C"/>
</dbReference>
<dbReference type="InterPro" id="IPR001236">
    <property type="entry name" value="Lactate/malate_DH_N"/>
</dbReference>
<dbReference type="InterPro" id="IPR015955">
    <property type="entry name" value="Lactate_DH/Glyco_Ohase_4_C"/>
</dbReference>
<dbReference type="InterPro" id="IPR036291">
    <property type="entry name" value="NAD(P)-bd_dom_sf"/>
</dbReference>
<dbReference type="NCBIfam" id="TIGR01771">
    <property type="entry name" value="L-LDH-NAD"/>
    <property type="match status" value="1"/>
</dbReference>
<dbReference type="NCBIfam" id="NF000824">
    <property type="entry name" value="PRK00066.1"/>
    <property type="match status" value="1"/>
</dbReference>
<dbReference type="PANTHER" id="PTHR43128">
    <property type="entry name" value="L-2-HYDROXYCARBOXYLATE DEHYDROGENASE (NAD(P)(+))"/>
    <property type="match status" value="1"/>
</dbReference>
<dbReference type="PANTHER" id="PTHR43128:SF2">
    <property type="entry name" value="L-LACTATE DEHYDROGENASE B CHAIN"/>
    <property type="match status" value="1"/>
</dbReference>
<dbReference type="Pfam" id="PF02866">
    <property type="entry name" value="Ldh_1_C"/>
    <property type="match status" value="1"/>
</dbReference>
<dbReference type="Pfam" id="PF00056">
    <property type="entry name" value="Ldh_1_N"/>
    <property type="match status" value="1"/>
</dbReference>
<dbReference type="PIRSF" id="PIRSF000102">
    <property type="entry name" value="Lac_mal_DH"/>
    <property type="match status" value="1"/>
</dbReference>
<dbReference type="PRINTS" id="PR00086">
    <property type="entry name" value="LLDHDRGNASE"/>
</dbReference>
<dbReference type="SUPFAM" id="SSF56327">
    <property type="entry name" value="LDH C-terminal domain-like"/>
    <property type="match status" value="1"/>
</dbReference>
<dbReference type="SUPFAM" id="SSF51735">
    <property type="entry name" value="NAD(P)-binding Rossmann-fold domains"/>
    <property type="match status" value="1"/>
</dbReference>
<dbReference type="PROSITE" id="PS00064">
    <property type="entry name" value="L_LDH"/>
    <property type="match status" value="1"/>
</dbReference>
<reference key="1">
    <citation type="journal article" date="1999" name="Mol. Phylogenet. Evol.">
        <title>Molecular evidence for a clade of turtles.</title>
        <authorList>
            <person name="Mannen H."/>
            <person name="Li S.S.-L."/>
        </authorList>
    </citation>
    <scope>NUCLEOTIDE SEQUENCE [MRNA]</scope>
    <source>
        <tissue>Liver</tissue>
    </source>
</reference>
<feature type="initiator methionine" description="Removed" evidence="1">
    <location>
        <position position="1"/>
    </location>
</feature>
<feature type="chain" id="PRO_0000168471" description="L-lactate dehydrogenase B chain">
    <location>
        <begin position="2"/>
        <end position="335"/>
    </location>
</feature>
<feature type="active site" description="Proton acceptor" evidence="1">
    <location>
        <position position="193"/>
    </location>
</feature>
<feature type="binding site" evidence="1">
    <location>
        <begin position="29"/>
        <end position="57"/>
    </location>
    <ligand>
        <name>NAD(+)</name>
        <dbReference type="ChEBI" id="CHEBI:57540"/>
    </ligand>
</feature>
<feature type="binding site" evidence="1">
    <location>
        <position position="99"/>
    </location>
    <ligand>
        <name>NAD(+)</name>
        <dbReference type="ChEBI" id="CHEBI:57540"/>
    </ligand>
</feature>
<feature type="binding site" evidence="1">
    <location>
        <position position="106"/>
    </location>
    <ligand>
        <name>substrate</name>
    </ligand>
</feature>
<feature type="binding site" evidence="1">
    <location>
        <position position="138"/>
    </location>
    <ligand>
        <name>NAD(+)</name>
        <dbReference type="ChEBI" id="CHEBI:57540"/>
    </ligand>
</feature>
<feature type="binding site" evidence="1">
    <location>
        <position position="138"/>
    </location>
    <ligand>
        <name>substrate</name>
    </ligand>
</feature>
<feature type="binding site" evidence="1">
    <location>
        <position position="169"/>
    </location>
    <ligand>
        <name>substrate</name>
    </ligand>
</feature>
<feature type="binding site" evidence="1">
    <location>
        <position position="248"/>
    </location>
    <ligand>
        <name>substrate</name>
    </ligand>
</feature>
<keyword id="KW-0963">Cytoplasm</keyword>
<keyword id="KW-0520">NAD</keyword>
<keyword id="KW-0560">Oxidoreductase</keyword>
<sequence>MATLMDKLITSVAPPSTKPNNKVTVVGVGQVGMACAISILEKGLCDELALVDVVEDKLKGEMMDLQHGSLFLNTHKIVADKDYSVTANSKVVVVTAGVRQQEGESRLDLVQRNVNVFKFIIPQVVKHSPDCIILVVSNPVDILTYVTWKLSGLPKHRVIGSGCNLDSARFRFLMAEKLGVHPTSCHGWILGEHGDSSVAVWSGVNVAGVSLQEMNPAMGSDQDPESWKQVHKQVVDSAYEVIKLKGYTNWAIGMSVADLLETILKNLCRVHPVSTMVKGMYGIENEVFLSLPCVLGSAGLTSVINQKLKDNEVAQLQNSATTLWNVQKDIKDLKS</sequence>
<protein>
    <recommendedName>
        <fullName>L-lactate dehydrogenase B chain</fullName>
        <shortName>LDH-B</shortName>
        <ecNumber evidence="2">1.1.1.27</ecNumber>
    </recommendedName>
</protein>
<comment type="function">
    <text evidence="2">Interconverts simultaneously and stereospecifically pyruvate and lactate with concomitant interconversion of NADH and NAD(+).</text>
</comment>
<comment type="catalytic activity">
    <reaction evidence="2">
        <text>(S)-lactate + NAD(+) = pyruvate + NADH + H(+)</text>
        <dbReference type="Rhea" id="RHEA:23444"/>
        <dbReference type="ChEBI" id="CHEBI:15361"/>
        <dbReference type="ChEBI" id="CHEBI:15378"/>
        <dbReference type="ChEBI" id="CHEBI:16651"/>
        <dbReference type="ChEBI" id="CHEBI:57540"/>
        <dbReference type="ChEBI" id="CHEBI:57945"/>
        <dbReference type="EC" id="1.1.1.27"/>
    </reaction>
    <physiologicalReaction direction="left-to-right" evidence="2">
        <dbReference type="Rhea" id="RHEA:23445"/>
    </physiologicalReaction>
    <physiologicalReaction direction="right-to-left" evidence="2">
        <dbReference type="Rhea" id="RHEA:23446"/>
    </physiologicalReaction>
</comment>
<comment type="pathway">
    <text evidence="2">Fermentation; pyruvate fermentation to lactate; (S)-lactate from pyruvate: step 1/1.</text>
</comment>
<comment type="subunit">
    <text evidence="1">Homotetramer.</text>
</comment>
<comment type="subcellular location">
    <subcellularLocation>
        <location evidence="1">Cytoplasm</location>
    </subcellularLocation>
</comment>
<comment type="similarity">
    <text evidence="3">Belongs to the LDH/MDH superfamily. LDH family.</text>
</comment>
<organism>
    <name type="scientific">Sceloporus undulatus</name>
    <name type="common">Eastern fence lizard</name>
    <name type="synonym">Stellio undulatus</name>
    <dbReference type="NCBI Taxonomy" id="8520"/>
    <lineage>
        <taxon>Eukaryota</taxon>
        <taxon>Metazoa</taxon>
        <taxon>Chordata</taxon>
        <taxon>Craniata</taxon>
        <taxon>Vertebrata</taxon>
        <taxon>Euteleostomi</taxon>
        <taxon>Lepidosauria</taxon>
        <taxon>Squamata</taxon>
        <taxon>Bifurcata</taxon>
        <taxon>Unidentata</taxon>
        <taxon>Episquamata</taxon>
        <taxon>Toxicofera</taxon>
        <taxon>Iguania</taxon>
        <taxon>Phrynosomatidae</taxon>
        <taxon>Phrynosomatinae</taxon>
        <taxon>Sceloporus</taxon>
    </lineage>
</organism>
<name>LDHB_SCEUN</name>
<proteinExistence type="evidence at transcript level"/>
<gene>
    <name type="primary">LDHB</name>
</gene>